<organism>
    <name type="scientific">Solanum tuberosum</name>
    <name type="common">Potato</name>
    <dbReference type="NCBI Taxonomy" id="4113"/>
    <lineage>
        <taxon>Eukaryota</taxon>
        <taxon>Viridiplantae</taxon>
        <taxon>Streptophyta</taxon>
        <taxon>Embryophyta</taxon>
        <taxon>Tracheophyta</taxon>
        <taxon>Spermatophyta</taxon>
        <taxon>Magnoliopsida</taxon>
        <taxon>eudicotyledons</taxon>
        <taxon>Gunneridae</taxon>
        <taxon>Pentapetalae</taxon>
        <taxon>asterids</taxon>
        <taxon>lamiids</taxon>
        <taxon>Solanales</taxon>
        <taxon>Solanaceae</taxon>
        <taxon>Solanoideae</taxon>
        <taxon>Solaneae</taxon>
        <taxon>Solanum</taxon>
    </lineage>
</organism>
<dbReference type="EMBL" id="AB004826">
    <property type="protein sequence ID" value="BAA20879.1"/>
    <property type="molecule type" value="mRNA"/>
</dbReference>
<dbReference type="RefSeq" id="NP_001274959.1">
    <property type="nucleotide sequence ID" value="NM_001288030.1"/>
</dbReference>
<dbReference type="SMR" id="P56337"/>
<dbReference type="FunCoup" id="P56337">
    <property type="interactions" value="1860"/>
</dbReference>
<dbReference type="STRING" id="4113.P56337"/>
<dbReference type="PaxDb" id="4113-PGSC0003DMT400063132"/>
<dbReference type="EnsemblPlants" id="PGSC0003DMT400063132">
    <property type="protein sequence ID" value="PGSC0003DMT400063132"/>
    <property type="gene ID" value="PGSC0003DMG400024558"/>
</dbReference>
<dbReference type="GeneID" id="102605379"/>
<dbReference type="Gramene" id="PGSC0003DMT400063132">
    <property type="protein sequence ID" value="PGSC0003DMT400063132"/>
    <property type="gene ID" value="PGSC0003DMG400024558"/>
</dbReference>
<dbReference type="KEGG" id="sot:102605379"/>
<dbReference type="eggNOG" id="KOG3271">
    <property type="taxonomic scope" value="Eukaryota"/>
</dbReference>
<dbReference type="HOGENOM" id="CLU_102600_1_0_1"/>
<dbReference type="InParanoid" id="P56337"/>
<dbReference type="OMA" id="PCKIMEL"/>
<dbReference type="OrthoDB" id="9975114at2759"/>
<dbReference type="Proteomes" id="UP000011115">
    <property type="component" value="Unassembled WGS sequence"/>
</dbReference>
<dbReference type="ExpressionAtlas" id="P56337">
    <property type="expression patterns" value="baseline"/>
</dbReference>
<dbReference type="GO" id="GO:0043022">
    <property type="term" value="F:ribosome binding"/>
    <property type="evidence" value="ECO:0007669"/>
    <property type="project" value="InterPro"/>
</dbReference>
<dbReference type="GO" id="GO:0003723">
    <property type="term" value="F:RNA binding"/>
    <property type="evidence" value="ECO:0007669"/>
    <property type="project" value="InterPro"/>
</dbReference>
<dbReference type="GO" id="GO:0003746">
    <property type="term" value="F:translation elongation factor activity"/>
    <property type="evidence" value="ECO:0000318"/>
    <property type="project" value="GO_Central"/>
</dbReference>
<dbReference type="GO" id="GO:0003743">
    <property type="term" value="F:translation initiation factor activity"/>
    <property type="evidence" value="ECO:0007669"/>
    <property type="project" value="UniProtKB-KW"/>
</dbReference>
<dbReference type="GO" id="GO:0045901">
    <property type="term" value="P:positive regulation of translational elongation"/>
    <property type="evidence" value="ECO:0007669"/>
    <property type="project" value="InterPro"/>
</dbReference>
<dbReference type="GO" id="GO:0045905">
    <property type="term" value="P:positive regulation of translational termination"/>
    <property type="evidence" value="ECO:0007669"/>
    <property type="project" value="InterPro"/>
</dbReference>
<dbReference type="GO" id="GO:0006414">
    <property type="term" value="P:translational elongation"/>
    <property type="evidence" value="ECO:0000318"/>
    <property type="project" value="GO_Central"/>
</dbReference>
<dbReference type="CDD" id="cd04468">
    <property type="entry name" value="S1_eIF5A"/>
    <property type="match status" value="1"/>
</dbReference>
<dbReference type="FunFam" id="2.30.30.30:FF:000012">
    <property type="entry name" value="Eukaryotic translation initiation factor 5A"/>
    <property type="match status" value="1"/>
</dbReference>
<dbReference type="FunFam" id="2.40.50.140:FF:000034">
    <property type="entry name" value="Eukaryotic translation initiation factor 5A"/>
    <property type="match status" value="1"/>
</dbReference>
<dbReference type="Gene3D" id="2.30.30.30">
    <property type="match status" value="1"/>
</dbReference>
<dbReference type="Gene3D" id="2.40.50.140">
    <property type="entry name" value="Nucleic acid-binding proteins"/>
    <property type="match status" value="1"/>
</dbReference>
<dbReference type="InterPro" id="IPR001884">
    <property type="entry name" value="IF5A-like"/>
</dbReference>
<dbReference type="InterPro" id="IPR048670">
    <property type="entry name" value="IF5A-like_N"/>
</dbReference>
<dbReference type="InterPro" id="IPR012340">
    <property type="entry name" value="NA-bd_OB-fold"/>
</dbReference>
<dbReference type="InterPro" id="IPR014722">
    <property type="entry name" value="Rib_uL2_dom2"/>
</dbReference>
<dbReference type="InterPro" id="IPR019769">
    <property type="entry name" value="Trans_elong_IF5A_hypusine_site"/>
</dbReference>
<dbReference type="InterPro" id="IPR020189">
    <property type="entry name" value="Transl_elong_IF5A_C"/>
</dbReference>
<dbReference type="InterPro" id="IPR008991">
    <property type="entry name" value="Translation_prot_SH3-like_sf"/>
</dbReference>
<dbReference type="NCBIfam" id="TIGR00037">
    <property type="entry name" value="eIF_5A"/>
    <property type="match status" value="1"/>
</dbReference>
<dbReference type="PANTHER" id="PTHR11673">
    <property type="entry name" value="TRANSLATION INITIATION FACTOR 5A FAMILY MEMBER"/>
    <property type="match status" value="1"/>
</dbReference>
<dbReference type="Pfam" id="PF01287">
    <property type="entry name" value="eIF-5a"/>
    <property type="match status" value="1"/>
</dbReference>
<dbReference type="Pfam" id="PF21485">
    <property type="entry name" value="IF5A-like_N"/>
    <property type="match status" value="1"/>
</dbReference>
<dbReference type="PIRSF" id="PIRSF003025">
    <property type="entry name" value="eIF5A"/>
    <property type="match status" value="1"/>
</dbReference>
<dbReference type="SMART" id="SM01376">
    <property type="entry name" value="eIF-5a"/>
    <property type="match status" value="1"/>
</dbReference>
<dbReference type="SUPFAM" id="SSF50249">
    <property type="entry name" value="Nucleic acid-binding proteins"/>
    <property type="match status" value="1"/>
</dbReference>
<dbReference type="SUPFAM" id="SSF50104">
    <property type="entry name" value="Translation proteins SH3-like domain"/>
    <property type="match status" value="1"/>
</dbReference>
<dbReference type="PROSITE" id="PS00302">
    <property type="entry name" value="IF5A_HYPUSINE"/>
    <property type="match status" value="1"/>
</dbReference>
<comment type="function">
    <text evidence="1">Translation factor that promotes translation elongation and termination, particularly upon ribosome stalling at specific amino acid sequence contexts (By similarity). Binds between the exit (E) and peptidyl (P) site of the ribosome and promotes rescue of stalled ribosome: specifically required for efficient translation of polyproline-containing peptides as well as other motifs that stall the ribosome (By similarity). Acts as a ribosome quality control (RQC) cofactor by joining the RQC complex to facilitate peptidyl transfer during CAT tailing step (By similarity).</text>
</comment>
<comment type="PTM">
    <text evidence="2">Lys-52 undergoes hypusination, a unique post-translational modification that consists in the addition of a butylamino group from spermidine to lysine side chain, leading to the formation of the unusual amino acid hypusine. eIF-5As are the only known proteins to undergo this modification, which is essential for their function.</text>
</comment>
<comment type="similarity">
    <text evidence="4">Belongs to the eIF-5A family.</text>
</comment>
<protein>
    <recommendedName>
        <fullName>Eukaryotic translation initiation factor 5A-5</fullName>
        <shortName>eIF-5A-5</shortName>
    </recommendedName>
    <alternativeName>
        <fullName>eIF-4D</fullName>
    </alternativeName>
</protein>
<feature type="chain" id="PRO_0000142481" description="Eukaryotic translation initiation factor 5A-5">
    <location>
        <begin position="1"/>
        <end position="159"/>
    </location>
</feature>
<feature type="region of interest" description="Disordered" evidence="3">
    <location>
        <begin position="1"/>
        <end position="23"/>
    </location>
</feature>
<feature type="compositionally biased region" description="Basic and acidic residues" evidence="3">
    <location>
        <begin position="1"/>
        <end position="12"/>
    </location>
</feature>
<feature type="modified residue" description="Hypusine" evidence="2">
    <location>
        <position position="52"/>
    </location>
</feature>
<gene>
    <name type="primary">EIF5A5</name>
</gene>
<keyword id="KW-0385">Hypusine</keyword>
<keyword id="KW-0396">Initiation factor</keyword>
<keyword id="KW-0648">Protein biosynthesis</keyword>
<keyword id="KW-1185">Reference proteome</keyword>
<name>IF5A5_SOLTU</name>
<sequence length="159" mass="17346">MSDEEHHFESKADAGASKTYPQQAGTIRKSGHIVIKNRPCKVVEVSTSKTGKHGHAKCHFVAIDIFTGKKLEDIVPSSHNCDVPHVNRTDYQLIDISEDGFVSLLTENGNTKDDLRLPTDDTLLAQVKDGFAEGKDLVLSVMSAMGEEQICGIKDIGPK</sequence>
<accession>P56337</accession>
<proteinExistence type="evidence at transcript level"/>
<evidence type="ECO:0000250" key="1">
    <source>
        <dbReference type="UniProtKB" id="P23301"/>
    </source>
</evidence>
<evidence type="ECO:0000250" key="2">
    <source>
        <dbReference type="UniProtKB" id="Q9XI91"/>
    </source>
</evidence>
<evidence type="ECO:0000256" key="3">
    <source>
        <dbReference type="SAM" id="MobiDB-lite"/>
    </source>
</evidence>
<evidence type="ECO:0000305" key="4"/>
<reference key="1">
    <citation type="online journal article" date="1997" name="Plant Gene Register">
        <title>Nucleotide sequence of five cDNAs encoding eukaryotic translation initiation factor 5A (eIF-5A) from potato.</title>
        <authorList>
            <person name="In J.G."/>
            <person name="Fujino K."/>
            <person name="Kikuta Y."/>
        </authorList>
        <locator>PGR97-147</locator>
    </citation>
    <scope>NUCLEOTIDE SEQUENCE [MRNA]</scope>
    <source>
        <strain>cv. Irish Cobbler</strain>
    </source>
</reference>
<reference key="2">
    <citation type="journal article" date="2011" name="Nature">
        <title>Genome sequence and analysis of the tuber crop potato.</title>
        <authorList>
            <consortium name="The Potato Genome Sequencing Consortium"/>
        </authorList>
    </citation>
    <scope>NUCLEOTIDE SEQUENCE [LARGE SCALE GENOMIC DNA]</scope>
    <source>
        <strain>cv. DM1-3 516 R44</strain>
    </source>
</reference>